<organism>
    <name type="scientific">Pectobacterium atrosepticum (strain SCRI 1043 / ATCC BAA-672)</name>
    <name type="common">Erwinia carotovora subsp. atroseptica</name>
    <dbReference type="NCBI Taxonomy" id="218491"/>
    <lineage>
        <taxon>Bacteria</taxon>
        <taxon>Pseudomonadati</taxon>
        <taxon>Pseudomonadota</taxon>
        <taxon>Gammaproteobacteria</taxon>
        <taxon>Enterobacterales</taxon>
        <taxon>Pectobacteriaceae</taxon>
        <taxon>Pectobacterium</taxon>
    </lineage>
</organism>
<accession>Q6D4G9</accession>
<name>IF3_PECAS</name>
<comment type="function">
    <text evidence="1">IF-3 binds to the 30S ribosomal subunit and shifts the equilibrium between 70S ribosomes and their 50S and 30S subunits in favor of the free subunits, thus enhancing the availability of 30S subunits on which protein synthesis initiation begins.</text>
</comment>
<comment type="subunit">
    <text evidence="1">Monomer.</text>
</comment>
<comment type="subcellular location">
    <subcellularLocation>
        <location evidence="1">Cytoplasm</location>
    </subcellularLocation>
</comment>
<comment type="similarity">
    <text evidence="1">Belongs to the IF-3 family.</text>
</comment>
<evidence type="ECO:0000255" key="1">
    <source>
        <dbReference type="HAMAP-Rule" id="MF_00080"/>
    </source>
</evidence>
<gene>
    <name evidence="1" type="primary">infC</name>
    <name type="ordered locus">ECA2421</name>
</gene>
<reference key="1">
    <citation type="journal article" date="2004" name="Proc. Natl. Acad. Sci. U.S.A.">
        <title>Genome sequence of the enterobacterial phytopathogen Erwinia carotovora subsp. atroseptica and characterization of virulence factors.</title>
        <authorList>
            <person name="Bell K.S."/>
            <person name="Sebaihia M."/>
            <person name="Pritchard L."/>
            <person name="Holden M.T.G."/>
            <person name="Hyman L.J."/>
            <person name="Holeva M.C."/>
            <person name="Thomson N.R."/>
            <person name="Bentley S.D."/>
            <person name="Churcher L.J.C."/>
            <person name="Mungall K."/>
            <person name="Atkin R."/>
            <person name="Bason N."/>
            <person name="Brooks K."/>
            <person name="Chillingworth T."/>
            <person name="Clark K."/>
            <person name="Doggett J."/>
            <person name="Fraser A."/>
            <person name="Hance Z."/>
            <person name="Hauser H."/>
            <person name="Jagels K."/>
            <person name="Moule S."/>
            <person name="Norbertczak H."/>
            <person name="Ormond D."/>
            <person name="Price C."/>
            <person name="Quail M.A."/>
            <person name="Sanders M."/>
            <person name="Walker D."/>
            <person name="Whitehead S."/>
            <person name="Salmond G.P.C."/>
            <person name="Birch P.R.J."/>
            <person name="Parkhill J."/>
            <person name="Toth I.K."/>
        </authorList>
    </citation>
    <scope>NUCLEOTIDE SEQUENCE [LARGE SCALE GENOMIC DNA]</scope>
    <source>
        <strain>SCRI 1043 / ATCC BAA-672</strain>
    </source>
</reference>
<proteinExistence type="inferred from homology"/>
<sequence length="180" mass="20541">MKGGKRVQPARPNRINREIRANEVRLTGVEGEQLGIVSLNEALEKAEEAGVDLVEISPNAEPPVCRIMDYGKFLYEKSKATKEQKKKQKVIQVKEIKFRPGTDDGDYQVKLRNLIRFLEDGDKAKITLRFRGREMAHQQIGIEVLNRVRDDLSELAVVESFPSKIEGRQMIMVLAPKKKQ</sequence>
<feature type="chain" id="PRO_0000177519" description="Translation initiation factor IF-3">
    <location>
        <begin position="1"/>
        <end position="180"/>
    </location>
</feature>
<dbReference type="EMBL" id="BX950851">
    <property type="protein sequence ID" value="CAG75324.1"/>
    <property type="molecule type" value="Genomic_DNA"/>
</dbReference>
<dbReference type="RefSeq" id="WP_011093973.1">
    <property type="nucleotide sequence ID" value="NC_004547.2"/>
</dbReference>
<dbReference type="SMR" id="Q6D4G9"/>
<dbReference type="STRING" id="218491.ECA2421"/>
<dbReference type="GeneID" id="57211301"/>
<dbReference type="KEGG" id="eca:ECA2421"/>
<dbReference type="eggNOG" id="COG0290">
    <property type="taxonomic scope" value="Bacteria"/>
</dbReference>
<dbReference type="HOGENOM" id="CLU_054919_3_2_6"/>
<dbReference type="OrthoDB" id="9806014at2"/>
<dbReference type="Proteomes" id="UP000007966">
    <property type="component" value="Chromosome"/>
</dbReference>
<dbReference type="GO" id="GO:0005829">
    <property type="term" value="C:cytosol"/>
    <property type="evidence" value="ECO:0007669"/>
    <property type="project" value="TreeGrafter"/>
</dbReference>
<dbReference type="GO" id="GO:0016020">
    <property type="term" value="C:membrane"/>
    <property type="evidence" value="ECO:0007669"/>
    <property type="project" value="TreeGrafter"/>
</dbReference>
<dbReference type="GO" id="GO:0043022">
    <property type="term" value="F:ribosome binding"/>
    <property type="evidence" value="ECO:0007669"/>
    <property type="project" value="TreeGrafter"/>
</dbReference>
<dbReference type="GO" id="GO:0003743">
    <property type="term" value="F:translation initiation factor activity"/>
    <property type="evidence" value="ECO:0007669"/>
    <property type="project" value="UniProtKB-UniRule"/>
</dbReference>
<dbReference type="GO" id="GO:0032790">
    <property type="term" value="P:ribosome disassembly"/>
    <property type="evidence" value="ECO:0007669"/>
    <property type="project" value="TreeGrafter"/>
</dbReference>
<dbReference type="FunFam" id="3.10.20.80:FF:000001">
    <property type="entry name" value="Translation initiation factor IF-3"/>
    <property type="match status" value="1"/>
</dbReference>
<dbReference type="FunFam" id="3.30.110.10:FF:000001">
    <property type="entry name" value="Translation initiation factor IF-3"/>
    <property type="match status" value="1"/>
</dbReference>
<dbReference type="Gene3D" id="3.30.110.10">
    <property type="entry name" value="Translation initiation factor 3 (IF-3), C-terminal domain"/>
    <property type="match status" value="1"/>
</dbReference>
<dbReference type="Gene3D" id="3.10.20.80">
    <property type="entry name" value="Translation initiation factor 3 (IF-3), N-terminal domain"/>
    <property type="match status" value="1"/>
</dbReference>
<dbReference type="HAMAP" id="MF_00080">
    <property type="entry name" value="IF_3"/>
    <property type="match status" value="1"/>
</dbReference>
<dbReference type="InterPro" id="IPR036788">
    <property type="entry name" value="T_IF-3_C_sf"/>
</dbReference>
<dbReference type="InterPro" id="IPR036787">
    <property type="entry name" value="T_IF-3_N_sf"/>
</dbReference>
<dbReference type="InterPro" id="IPR019813">
    <property type="entry name" value="Translation_initiation_fac3_CS"/>
</dbReference>
<dbReference type="InterPro" id="IPR001288">
    <property type="entry name" value="Translation_initiation_fac_3"/>
</dbReference>
<dbReference type="InterPro" id="IPR019815">
    <property type="entry name" value="Translation_initiation_fac_3_C"/>
</dbReference>
<dbReference type="InterPro" id="IPR019814">
    <property type="entry name" value="Translation_initiation_fac_3_N"/>
</dbReference>
<dbReference type="NCBIfam" id="TIGR00168">
    <property type="entry name" value="infC"/>
    <property type="match status" value="1"/>
</dbReference>
<dbReference type="PANTHER" id="PTHR10938">
    <property type="entry name" value="TRANSLATION INITIATION FACTOR IF-3"/>
    <property type="match status" value="1"/>
</dbReference>
<dbReference type="PANTHER" id="PTHR10938:SF0">
    <property type="entry name" value="TRANSLATION INITIATION FACTOR IF-3, MITOCHONDRIAL"/>
    <property type="match status" value="1"/>
</dbReference>
<dbReference type="Pfam" id="PF00707">
    <property type="entry name" value="IF3_C"/>
    <property type="match status" value="1"/>
</dbReference>
<dbReference type="Pfam" id="PF05198">
    <property type="entry name" value="IF3_N"/>
    <property type="match status" value="1"/>
</dbReference>
<dbReference type="SUPFAM" id="SSF55200">
    <property type="entry name" value="Translation initiation factor IF3, C-terminal domain"/>
    <property type="match status" value="1"/>
</dbReference>
<dbReference type="SUPFAM" id="SSF54364">
    <property type="entry name" value="Translation initiation factor IF3, N-terminal domain"/>
    <property type="match status" value="1"/>
</dbReference>
<dbReference type="PROSITE" id="PS00938">
    <property type="entry name" value="IF3"/>
    <property type="match status" value="1"/>
</dbReference>
<keyword id="KW-0963">Cytoplasm</keyword>
<keyword id="KW-0396">Initiation factor</keyword>
<keyword id="KW-0648">Protein biosynthesis</keyword>
<keyword id="KW-1185">Reference proteome</keyword>
<protein>
    <recommendedName>
        <fullName evidence="1">Translation initiation factor IF-3</fullName>
    </recommendedName>
</protein>